<feature type="chain" id="PRO_1000145258" description="ATP synthase subunit a">
    <location>
        <begin position="1"/>
        <end position="244"/>
    </location>
</feature>
<feature type="transmembrane region" description="Helical" evidence="1">
    <location>
        <begin position="17"/>
        <end position="37"/>
    </location>
</feature>
<feature type="transmembrane region" description="Helical" evidence="1">
    <location>
        <begin position="75"/>
        <end position="95"/>
    </location>
</feature>
<feature type="transmembrane region" description="Helical" evidence="1">
    <location>
        <begin position="112"/>
        <end position="132"/>
    </location>
</feature>
<feature type="transmembrane region" description="Helical" evidence="1">
    <location>
        <begin position="164"/>
        <end position="184"/>
    </location>
</feature>
<feature type="transmembrane region" description="Helical" evidence="1">
    <location>
        <begin position="196"/>
        <end position="216"/>
    </location>
</feature>
<feature type="transmembrane region" description="Helical" evidence="1">
    <location>
        <begin position="217"/>
        <end position="237"/>
    </location>
</feature>
<name>ATP6_BACVZ</name>
<reference key="1">
    <citation type="journal article" date="2007" name="Nat. Biotechnol.">
        <title>Comparative analysis of the complete genome sequence of the plant growth-promoting bacterium Bacillus amyloliquefaciens FZB42.</title>
        <authorList>
            <person name="Chen X.H."/>
            <person name="Koumoutsi A."/>
            <person name="Scholz R."/>
            <person name="Eisenreich A."/>
            <person name="Schneider K."/>
            <person name="Heinemeyer I."/>
            <person name="Morgenstern B."/>
            <person name="Voss B."/>
            <person name="Hess W.R."/>
            <person name="Reva O."/>
            <person name="Junge H."/>
            <person name="Voigt B."/>
            <person name="Jungblut P.R."/>
            <person name="Vater J."/>
            <person name="Suessmuth R."/>
            <person name="Liesegang H."/>
            <person name="Strittmatter A."/>
            <person name="Gottschalk G."/>
            <person name="Borriss R."/>
        </authorList>
    </citation>
    <scope>NUCLEOTIDE SEQUENCE [LARGE SCALE GENOMIC DNA]</scope>
    <source>
        <strain>DSM 23117 / BGSC 10A6 / LMG 26770 / FZB42</strain>
    </source>
</reference>
<sequence length="244" mass="27307">MNHDYRTIDLFGLTFNLTNILMITVASVIVLLIAILTTRTLSIRPGKAQNFMEWIVDFVRNIIGSTMDLKTGANFLALGVTLLMYIFVSNMLGLPFSVTVGHELWWKSPTADPAITLTLAVMVVSLTHYYGVKMKGLKEYSKDYLRPVPLMFPMKIIEEFANTLTLGLRLYGNIFAGEILLGLLANLATNFYSNSFFLGLVGTVGAIIPMLAWQAFSLFIGTIQAFIFTMLTMVYMSHKISHDH</sequence>
<evidence type="ECO:0000255" key="1">
    <source>
        <dbReference type="HAMAP-Rule" id="MF_01393"/>
    </source>
</evidence>
<comment type="function">
    <text evidence="1">Key component of the proton channel; it plays a direct role in the translocation of protons across the membrane.</text>
</comment>
<comment type="subunit">
    <text evidence="1">F-type ATPases have 2 components, CF(1) - the catalytic core - and CF(0) - the membrane proton channel. CF(1) has five subunits: alpha(3), beta(3), gamma(1), delta(1), epsilon(1). CF(0) has three main subunits: a(1), b(2) and c(9-12). The alpha and beta chains form an alternating ring which encloses part of the gamma chain. CF(1) is attached to CF(0) by a central stalk formed by the gamma and epsilon chains, while a peripheral stalk is formed by the delta and b chains.</text>
</comment>
<comment type="subcellular location">
    <subcellularLocation>
        <location evidence="1">Cell membrane</location>
        <topology evidence="1">Multi-pass membrane protein</topology>
    </subcellularLocation>
</comment>
<comment type="similarity">
    <text evidence="1">Belongs to the ATPase A chain family.</text>
</comment>
<gene>
    <name evidence="1" type="primary">atpB</name>
    <name type="ordered locus">RBAM_034030</name>
</gene>
<protein>
    <recommendedName>
        <fullName evidence="1">ATP synthase subunit a</fullName>
    </recommendedName>
    <alternativeName>
        <fullName evidence="1">ATP synthase F0 sector subunit a</fullName>
    </alternativeName>
    <alternativeName>
        <fullName evidence="1">F-ATPase subunit 6</fullName>
    </alternativeName>
</protein>
<accession>A7Z9Q6</accession>
<dbReference type="EMBL" id="CP000560">
    <property type="protein sequence ID" value="ABS75732.1"/>
    <property type="molecule type" value="Genomic_DNA"/>
</dbReference>
<dbReference type="RefSeq" id="WP_003151158.1">
    <property type="nucleotide sequence ID" value="NC_009725.2"/>
</dbReference>
<dbReference type="SMR" id="A7Z9Q6"/>
<dbReference type="GeneID" id="93082547"/>
<dbReference type="KEGG" id="bay:RBAM_034030"/>
<dbReference type="HOGENOM" id="CLU_041018_2_3_9"/>
<dbReference type="Proteomes" id="UP000001120">
    <property type="component" value="Chromosome"/>
</dbReference>
<dbReference type="GO" id="GO:0005886">
    <property type="term" value="C:plasma membrane"/>
    <property type="evidence" value="ECO:0007669"/>
    <property type="project" value="UniProtKB-SubCell"/>
</dbReference>
<dbReference type="GO" id="GO:0045259">
    <property type="term" value="C:proton-transporting ATP synthase complex"/>
    <property type="evidence" value="ECO:0007669"/>
    <property type="project" value="UniProtKB-KW"/>
</dbReference>
<dbReference type="GO" id="GO:0046933">
    <property type="term" value="F:proton-transporting ATP synthase activity, rotational mechanism"/>
    <property type="evidence" value="ECO:0007669"/>
    <property type="project" value="UniProtKB-UniRule"/>
</dbReference>
<dbReference type="GO" id="GO:0042777">
    <property type="term" value="P:proton motive force-driven plasma membrane ATP synthesis"/>
    <property type="evidence" value="ECO:0007669"/>
    <property type="project" value="TreeGrafter"/>
</dbReference>
<dbReference type="CDD" id="cd00310">
    <property type="entry name" value="ATP-synt_Fo_a_6"/>
    <property type="match status" value="1"/>
</dbReference>
<dbReference type="FunFam" id="1.20.120.220:FF:000005">
    <property type="entry name" value="ATP synthase subunit a"/>
    <property type="match status" value="1"/>
</dbReference>
<dbReference type="Gene3D" id="1.20.120.220">
    <property type="entry name" value="ATP synthase, F0 complex, subunit A"/>
    <property type="match status" value="1"/>
</dbReference>
<dbReference type="HAMAP" id="MF_01393">
    <property type="entry name" value="ATP_synth_a_bact"/>
    <property type="match status" value="1"/>
</dbReference>
<dbReference type="InterPro" id="IPR045082">
    <property type="entry name" value="ATP_syn_F0_a_bact/chloroplast"/>
</dbReference>
<dbReference type="InterPro" id="IPR000568">
    <property type="entry name" value="ATP_synth_F0_asu"/>
</dbReference>
<dbReference type="InterPro" id="IPR023011">
    <property type="entry name" value="ATP_synth_F0_asu_AS"/>
</dbReference>
<dbReference type="InterPro" id="IPR035908">
    <property type="entry name" value="F0_ATP_A_sf"/>
</dbReference>
<dbReference type="NCBIfam" id="TIGR01131">
    <property type="entry name" value="ATP_synt_6_or_A"/>
    <property type="match status" value="1"/>
</dbReference>
<dbReference type="NCBIfam" id="NF004479">
    <property type="entry name" value="PRK05815.1-4"/>
    <property type="match status" value="1"/>
</dbReference>
<dbReference type="PANTHER" id="PTHR42823">
    <property type="entry name" value="ATP SYNTHASE SUBUNIT A, CHLOROPLASTIC"/>
    <property type="match status" value="1"/>
</dbReference>
<dbReference type="PANTHER" id="PTHR42823:SF3">
    <property type="entry name" value="ATP SYNTHASE SUBUNIT A, CHLOROPLASTIC"/>
    <property type="match status" value="1"/>
</dbReference>
<dbReference type="Pfam" id="PF00119">
    <property type="entry name" value="ATP-synt_A"/>
    <property type="match status" value="1"/>
</dbReference>
<dbReference type="PRINTS" id="PR00123">
    <property type="entry name" value="ATPASEA"/>
</dbReference>
<dbReference type="SUPFAM" id="SSF81336">
    <property type="entry name" value="F1F0 ATP synthase subunit A"/>
    <property type="match status" value="1"/>
</dbReference>
<dbReference type="PROSITE" id="PS00449">
    <property type="entry name" value="ATPASE_A"/>
    <property type="match status" value="1"/>
</dbReference>
<proteinExistence type="inferred from homology"/>
<organism>
    <name type="scientific">Bacillus velezensis (strain DSM 23117 / BGSC 10A6 / LMG 26770 / FZB42)</name>
    <name type="common">Bacillus amyloliquefaciens subsp. plantarum</name>
    <dbReference type="NCBI Taxonomy" id="326423"/>
    <lineage>
        <taxon>Bacteria</taxon>
        <taxon>Bacillati</taxon>
        <taxon>Bacillota</taxon>
        <taxon>Bacilli</taxon>
        <taxon>Bacillales</taxon>
        <taxon>Bacillaceae</taxon>
        <taxon>Bacillus</taxon>
        <taxon>Bacillus amyloliquefaciens group</taxon>
    </lineage>
</organism>
<keyword id="KW-0066">ATP synthesis</keyword>
<keyword id="KW-1003">Cell membrane</keyword>
<keyword id="KW-0138">CF(0)</keyword>
<keyword id="KW-0375">Hydrogen ion transport</keyword>
<keyword id="KW-0406">Ion transport</keyword>
<keyword id="KW-0472">Membrane</keyword>
<keyword id="KW-0812">Transmembrane</keyword>
<keyword id="KW-1133">Transmembrane helix</keyword>
<keyword id="KW-0813">Transport</keyword>